<evidence type="ECO:0000255" key="1">
    <source>
        <dbReference type="HAMAP-Rule" id="MF_00435"/>
    </source>
</evidence>
<evidence type="ECO:0000255" key="2">
    <source>
        <dbReference type="PROSITE-ProRule" id="PRU01197"/>
    </source>
</evidence>
<evidence type="ECO:0000255" key="3">
    <source>
        <dbReference type="PROSITE-ProRule" id="PRU01198"/>
    </source>
</evidence>
<name>ILVC_VESOH</name>
<feature type="chain" id="PRO_1000050590" description="Ketol-acid reductoisomerase (NADP(+))">
    <location>
        <begin position="1"/>
        <end position="334"/>
    </location>
</feature>
<feature type="domain" description="KARI N-terminal Rossmann" evidence="2">
    <location>
        <begin position="1"/>
        <end position="181"/>
    </location>
</feature>
<feature type="domain" description="KARI C-terminal knotted" evidence="3">
    <location>
        <begin position="182"/>
        <end position="323"/>
    </location>
</feature>
<feature type="active site" evidence="1">
    <location>
        <position position="107"/>
    </location>
</feature>
<feature type="binding site" evidence="1">
    <location>
        <begin position="24"/>
        <end position="27"/>
    </location>
    <ligand>
        <name>NADP(+)</name>
        <dbReference type="ChEBI" id="CHEBI:58349"/>
    </ligand>
</feature>
<feature type="binding site" evidence="1">
    <location>
        <position position="47"/>
    </location>
    <ligand>
        <name>NADP(+)</name>
        <dbReference type="ChEBI" id="CHEBI:58349"/>
    </ligand>
</feature>
<feature type="binding site" evidence="1">
    <location>
        <position position="50"/>
    </location>
    <ligand>
        <name>NADP(+)</name>
        <dbReference type="ChEBI" id="CHEBI:58349"/>
    </ligand>
</feature>
<feature type="binding site" evidence="1">
    <location>
        <position position="52"/>
    </location>
    <ligand>
        <name>NADP(+)</name>
        <dbReference type="ChEBI" id="CHEBI:58349"/>
    </ligand>
</feature>
<feature type="binding site" evidence="1">
    <location>
        <begin position="82"/>
        <end position="85"/>
    </location>
    <ligand>
        <name>NADP(+)</name>
        <dbReference type="ChEBI" id="CHEBI:58349"/>
    </ligand>
</feature>
<feature type="binding site" evidence="1">
    <location>
        <position position="133"/>
    </location>
    <ligand>
        <name>NADP(+)</name>
        <dbReference type="ChEBI" id="CHEBI:58349"/>
    </ligand>
</feature>
<feature type="binding site" evidence="1">
    <location>
        <position position="190"/>
    </location>
    <ligand>
        <name>Mg(2+)</name>
        <dbReference type="ChEBI" id="CHEBI:18420"/>
        <label>1</label>
    </ligand>
</feature>
<feature type="binding site" evidence="1">
    <location>
        <position position="190"/>
    </location>
    <ligand>
        <name>Mg(2+)</name>
        <dbReference type="ChEBI" id="CHEBI:18420"/>
        <label>2</label>
    </ligand>
</feature>
<feature type="binding site" evidence="1">
    <location>
        <position position="194"/>
    </location>
    <ligand>
        <name>Mg(2+)</name>
        <dbReference type="ChEBI" id="CHEBI:18420"/>
        <label>1</label>
    </ligand>
</feature>
<feature type="binding site" evidence="1">
    <location>
        <position position="226"/>
    </location>
    <ligand>
        <name>Mg(2+)</name>
        <dbReference type="ChEBI" id="CHEBI:18420"/>
        <label>2</label>
    </ligand>
</feature>
<feature type="binding site" evidence="1">
    <location>
        <position position="230"/>
    </location>
    <ligand>
        <name>Mg(2+)</name>
        <dbReference type="ChEBI" id="CHEBI:18420"/>
        <label>2</label>
    </ligand>
</feature>
<feature type="binding site" evidence="1">
    <location>
        <position position="251"/>
    </location>
    <ligand>
        <name>substrate</name>
    </ligand>
</feature>
<keyword id="KW-0028">Amino-acid biosynthesis</keyword>
<keyword id="KW-0100">Branched-chain amino acid biosynthesis</keyword>
<keyword id="KW-0460">Magnesium</keyword>
<keyword id="KW-0479">Metal-binding</keyword>
<keyword id="KW-0521">NADP</keyword>
<keyword id="KW-0560">Oxidoreductase</keyword>
<keyword id="KW-1185">Reference proteome</keyword>
<proteinExistence type="inferred from homology"/>
<gene>
    <name evidence="1" type="primary">ilvC</name>
    <name type="ordered locus">COSY_0413</name>
</gene>
<accession>A5CWZ1</accession>
<organism>
    <name type="scientific">Vesicomyosocius okutanii subsp. Calyptogena okutanii (strain HA)</name>
    <dbReference type="NCBI Taxonomy" id="412965"/>
    <lineage>
        <taxon>Bacteria</taxon>
        <taxon>Pseudomonadati</taxon>
        <taxon>Pseudomonadota</taxon>
        <taxon>Gammaproteobacteria</taxon>
        <taxon>Candidatus Pseudothioglobaceae</taxon>
        <taxon>Candidatus Vesicomyosocius</taxon>
    </lineage>
</organism>
<dbReference type="EC" id="1.1.1.86" evidence="1"/>
<dbReference type="EMBL" id="AP009247">
    <property type="protein sequence ID" value="BAF61532.1"/>
    <property type="molecule type" value="Genomic_DNA"/>
</dbReference>
<dbReference type="RefSeq" id="WP_011929802.1">
    <property type="nucleotide sequence ID" value="NC_009465.1"/>
</dbReference>
<dbReference type="SMR" id="A5CWZ1"/>
<dbReference type="STRING" id="412965.COSY_0413"/>
<dbReference type="KEGG" id="vok:COSY_0413"/>
<dbReference type="eggNOG" id="COG0059">
    <property type="taxonomic scope" value="Bacteria"/>
</dbReference>
<dbReference type="HOGENOM" id="CLU_033821_0_1_6"/>
<dbReference type="OrthoDB" id="9804088at2"/>
<dbReference type="UniPathway" id="UPA00047">
    <property type="reaction ID" value="UER00056"/>
</dbReference>
<dbReference type="UniPathway" id="UPA00049">
    <property type="reaction ID" value="UER00060"/>
</dbReference>
<dbReference type="Proteomes" id="UP000000247">
    <property type="component" value="Chromosome"/>
</dbReference>
<dbReference type="GO" id="GO:0005829">
    <property type="term" value="C:cytosol"/>
    <property type="evidence" value="ECO:0007669"/>
    <property type="project" value="TreeGrafter"/>
</dbReference>
<dbReference type="GO" id="GO:0004455">
    <property type="term" value="F:ketol-acid reductoisomerase activity"/>
    <property type="evidence" value="ECO:0007669"/>
    <property type="project" value="UniProtKB-UniRule"/>
</dbReference>
<dbReference type="GO" id="GO:0000287">
    <property type="term" value="F:magnesium ion binding"/>
    <property type="evidence" value="ECO:0007669"/>
    <property type="project" value="UniProtKB-UniRule"/>
</dbReference>
<dbReference type="GO" id="GO:0050661">
    <property type="term" value="F:NADP binding"/>
    <property type="evidence" value="ECO:0007669"/>
    <property type="project" value="InterPro"/>
</dbReference>
<dbReference type="GO" id="GO:0009097">
    <property type="term" value="P:isoleucine biosynthetic process"/>
    <property type="evidence" value="ECO:0007669"/>
    <property type="project" value="UniProtKB-UniRule"/>
</dbReference>
<dbReference type="GO" id="GO:0009099">
    <property type="term" value="P:L-valine biosynthetic process"/>
    <property type="evidence" value="ECO:0007669"/>
    <property type="project" value="UniProtKB-UniRule"/>
</dbReference>
<dbReference type="FunFam" id="3.40.50.720:FF:000023">
    <property type="entry name" value="Ketol-acid reductoisomerase (NADP(+))"/>
    <property type="match status" value="1"/>
</dbReference>
<dbReference type="Gene3D" id="6.10.240.10">
    <property type="match status" value="1"/>
</dbReference>
<dbReference type="Gene3D" id="3.40.50.720">
    <property type="entry name" value="NAD(P)-binding Rossmann-like Domain"/>
    <property type="match status" value="1"/>
</dbReference>
<dbReference type="HAMAP" id="MF_00435">
    <property type="entry name" value="IlvC"/>
    <property type="match status" value="1"/>
</dbReference>
<dbReference type="InterPro" id="IPR008927">
    <property type="entry name" value="6-PGluconate_DH-like_C_sf"/>
</dbReference>
<dbReference type="InterPro" id="IPR013023">
    <property type="entry name" value="KARI"/>
</dbReference>
<dbReference type="InterPro" id="IPR000506">
    <property type="entry name" value="KARI_C"/>
</dbReference>
<dbReference type="InterPro" id="IPR013116">
    <property type="entry name" value="KARI_N"/>
</dbReference>
<dbReference type="InterPro" id="IPR014359">
    <property type="entry name" value="KARI_prok"/>
</dbReference>
<dbReference type="InterPro" id="IPR036291">
    <property type="entry name" value="NAD(P)-bd_dom_sf"/>
</dbReference>
<dbReference type="NCBIfam" id="TIGR00465">
    <property type="entry name" value="ilvC"/>
    <property type="match status" value="1"/>
</dbReference>
<dbReference type="NCBIfam" id="NF004017">
    <property type="entry name" value="PRK05479.1"/>
    <property type="match status" value="1"/>
</dbReference>
<dbReference type="NCBIfam" id="NF009940">
    <property type="entry name" value="PRK13403.1"/>
    <property type="match status" value="1"/>
</dbReference>
<dbReference type="PANTHER" id="PTHR21371">
    <property type="entry name" value="KETOL-ACID REDUCTOISOMERASE, MITOCHONDRIAL"/>
    <property type="match status" value="1"/>
</dbReference>
<dbReference type="PANTHER" id="PTHR21371:SF1">
    <property type="entry name" value="KETOL-ACID REDUCTOISOMERASE, MITOCHONDRIAL"/>
    <property type="match status" value="1"/>
</dbReference>
<dbReference type="Pfam" id="PF01450">
    <property type="entry name" value="KARI_C"/>
    <property type="match status" value="1"/>
</dbReference>
<dbReference type="Pfam" id="PF07991">
    <property type="entry name" value="KARI_N"/>
    <property type="match status" value="1"/>
</dbReference>
<dbReference type="PIRSF" id="PIRSF000116">
    <property type="entry name" value="IlvC_gammaproteo"/>
    <property type="match status" value="1"/>
</dbReference>
<dbReference type="SUPFAM" id="SSF48179">
    <property type="entry name" value="6-phosphogluconate dehydrogenase C-terminal domain-like"/>
    <property type="match status" value="1"/>
</dbReference>
<dbReference type="SUPFAM" id="SSF51735">
    <property type="entry name" value="NAD(P)-binding Rossmann-fold domains"/>
    <property type="match status" value="1"/>
</dbReference>
<dbReference type="PROSITE" id="PS51851">
    <property type="entry name" value="KARI_C"/>
    <property type="match status" value="1"/>
</dbReference>
<dbReference type="PROSITE" id="PS51850">
    <property type="entry name" value="KARI_N"/>
    <property type="match status" value="1"/>
</dbReference>
<comment type="function">
    <text evidence="1">Involved in the biosynthesis of branched-chain amino acids (BCAA). Catalyzes an alkyl-migration followed by a ketol-acid reduction of (S)-2-acetolactate (S2AL) to yield (R)-2,3-dihydroxy-isovalerate. In the isomerase reaction, S2AL is rearranged via a Mg-dependent methyl migration to produce 3-hydroxy-3-methyl-2-ketobutyrate (HMKB). In the reductase reaction, this 2-ketoacid undergoes a metal-dependent reduction by NADPH to yield (R)-2,3-dihydroxy-isovalerate.</text>
</comment>
<comment type="catalytic activity">
    <reaction evidence="1">
        <text>(2R)-2,3-dihydroxy-3-methylbutanoate + NADP(+) = (2S)-2-acetolactate + NADPH + H(+)</text>
        <dbReference type="Rhea" id="RHEA:22068"/>
        <dbReference type="ChEBI" id="CHEBI:15378"/>
        <dbReference type="ChEBI" id="CHEBI:49072"/>
        <dbReference type="ChEBI" id="CHEBI:57783"/>
        <dbReference type="ChEBI" id="CHEBI:58349"/>
        <dbReference type="ChEBI" id="CHEBI:58476"/>
        <dbReference type="EC" id="1.1.1.86"/>
    </reaction>
</comment>
<comment type="catalytic activity">
    <reaction evidence="1">
        <text>(2R,3R)-2,3-dihydroxy-3-methylpentanoate + NADP(+) = (S)-2-ethyl-2-hydroxy-3-oxobutanoate + NADPH + H(+)</text>
        <dbReference type="Rhea" id="RHEA:13493"/>
        <dbReference type="ChEBI" id="CHEBI:15378"/>
        <dbReference type="ChEBI" id="CHEBI:49256"/>
        <dbReference type="ChEBI" id="CHEBI:49258"/>
        <dbReference type="ChEBI" id="CHEBI:57783"/>
        <dbReference type="ChEBI" id="CHEBI:58349"/>
        <dbReference type="EC" id="1.1.1.86"/>
    </reaction>
</comment>
<comment type="cofactor">
    <cofactor evidence="1">
        <name>Mg(2+)</name>
        <dbReference type="ChEBI" id="CHEBI:18420"/>
    </cofactor>
    <text evidence="1">Binds 2 magnesium ions per subunit.</text>
</comment>
<comment type="pathway">
    <text evidence="1">Amino-acid biosynthesis; L-isoleucine biosynthesis; L-isoleucine from 2-oxobutanoate: step 2/4.</text>
</comment>
<comment type="pathway">
    <text evidence="1">Amino-acid biosynthesis; L-valine biosynthesis; L-valine from pyruvate: step 2/4.</text>
</comment>
<comment type="similarity">
    <text evidence="1">Belongs to the ketol-acid reductoisomerase family.</text>
</comment>
<sequence length="334" mass="36444">MNIYYDKNADLNIIKDMKVAIVGYGSQGHAHANNLRDSNVEVVVALRDGSASSKKASDAGLNVKSIKQATAWADLIMVLAPDEFQAQIYTDSIEPNLKQGATLAFAHGFNIHYNRIIPRADLDVIMIAPKAPGHTVRSEFVKGGGIPDLIAVFQDVSGNAKDTALSYASAIGGGRTGILETSFKDETETDLFGEQVVLCGGTTALVQAGFETLVEAGYEPEMAYFECLHELKLIVDLMYEGGIANMRYSISNTAEYGDITRGSRIVTADTKDEMKKILIEIQNGVFAKEFVANVGELPAHREVQRAHQIEQVGESLRSMMPWINKNKIVDQSKN</sequence>
<protein>
    <recommendedName>
        <fullName evidence="1">Ketol-acid reductoisomerase (NADP(+))</fullName>
        <shortName evidence="1">KARI</shortName>
        <ecNumber evidence="1">1.1.1.86</ecNumber>
    </recommendedName>
    <alternativeName>
        <fullName evidence="1">Acetohydroxy-acid isomeroreductase</fullName>
        <shortName evidence="1">AHIR</shortName>
    </alternativeName>
    <alternativeName>
        <fullName evidence="1">Alpha-keto-beta-hydroxylacyl reductoisomerase</fullName>
    </alternativeName>
    <alternativeName>
        <fullName evidence="1">Ketol-acid reductoisomerase type 1</fullName>
    </alternativeName>
    <alternativeName>
        <fullName evidence="1">Ketol-acid reductoisomerase type I</fullName>
    </alternativeName>
</protein>
<reference key="1">
    <citation type="journal article" date="2007" name="Curr. Biol.">
        <title>Reduced genome of the thioautotrophic intracellular symbiont in a deep-sea clam, Calyptogena okutanii.</title>
        <authorList>
            <person name="Kuwahara H."/>
            <person name="Yoshida T."/>
            <person name="Takaki Y."/>
            <person name="Shimamura S."/>
            <person name="Nishi S."/>
            <person name="Harada M."/>
            <person name="Matsuyama K."/>
            <person name="Takishita K."/>
            <person name="Kawato M."/>
            <person name="Uematsu K."/>
            <person name="Fujiwara Y."/>
            <person name="Sato T."/>
            <person name="Kato C."/>
            <person name="Kitagawa M."/>
            <person name="Kato I."/>
            <person name="Maruyama T."/>
        </authorList>
    </citation>
    <scope>NUCLEOTIDE SEQUENCE [LARGE SCALE GENOMIC DNA]</scope>
    <source>
        <strain>HA</strain>
    </source>
</reference>